<name>HGLB2_FASHE</name>
<reference key="1">
    <citation type="journal article" date="1995" name="Biochem. Biophys. Res. Commun.">
        <title>Fasciola hepatica: rapid identification of newly excysted juvenile proteins.</title>
        <authorList>
            <person name="Tkalcevic J."/>
            <person name="Ashman K."/>
            <person name="Meeusen E."/>
        </authorList>
    </citation>
    <scope>PROTEIN SEQUENCE</scope>
</reference>
<comment type="catalytic activity">
    <reaction>
        <text>Hydrolysis of proteins and small molecule substrates at -Asn-|-Xaa- bonds.</text>
        <dbReference type="EC" id="3.4.22.34"/>
    </reaction>
</comment>
<comment type="developmental stage">
    <text>Expressed at the newly excysted juvenile stage.</text>
</comment>
<comment type="similarity">
    <text evidence="1">Belongs to the peptidase C13 family.</text>
</comment>
<proteinExistence type="evidence at protein level"/>
<dbReference type="EC" id="3.4.22.34"/>
<dbReference type="MEROPS" id="C13.005"/>
<dbReference type="GO" id="GO:0004197">
    <property type="term" value="F:cysteine-type endopeptidase activity"/>
    <property type="evidence" value="ECO:0007669"/>
    <property type="project" value="UniProtKB-EC"/>
</dbReference>
<dbReference type="GO" id="GO:0006508">
    <property type="term" value="P:proteolysis"/>
    <property type="evidence" value="ECO:0007669"/>
    <property type="project" value="UniProtKB-KW"/>
</dbReference>
<dbReference type="Gene3D" id="3.40.50.1460">
    <property type="match status" value="1"/>
</dbReference>
<dbReference type="InterPro" id="IPR001096">
    <property type="entry name" value="Peptidase_C13"/>
</dbReference>
<dbReference type="Pfam" id="PF01650">
    <property type="entry name" value="Peptidase_C13"/>
    <property type="match status" value="1"/>
</dbReference>
<feature type="chain" id="PRO_0000215380" description="Hemoglobinase-like protein 2">
    <location>
        <begin position="1"/>
        <end position="22" status="greater than"/>
    </location>
</feature>
<feature type="non-terminal residue">
    <location>
        <position position="22"/>
    </location>
</feature>
<protein>
    <recommendedName>
        <fullName>Hemoglobinase-like protein 2</fullName>
        <ecNumber>3.4.22.34</ecNumber>
    </recommendedName>
    <alternativeName>
        <fullName>Newly excysted juvenile protein 6</fullName>
    </alternativeName>
</protein>
<keyword id="KW-0903">Direct protein sequencing</keyword>
<keyword id="KW-0378">Hydrolase</keyword>
<keyword id="KW-0645">Protease</keyword>
<keyword id="KW-0788">Thiol protease</keyword>
<evidence type="ECO:0000305" key="1"/>
<accession>P80530</accession>
<sequence>KNWAVLVAGSDGLPNYRHHADV</sequence>
<organism>
    <name type="scientific">Fasciola hepatica</name>
    <name type="common">Liver fluke</name>
    <dbReference type="NCBI Taxonomy" id="6192"/>
    <lineage>
        <taxon>Eukaryota</taxon>
        <taxon>Metazoa</taxon>
        <taxon>Spiralia</taxon>
        <taxon>Lophotrochozoa</taxon>
        <taxon>Platyhelminthes</taxon>
        <taxon>Trematoda</taxon>
        <taxon>Digenea</taxon>
        <taxon>Plagiorchiida</taxon>
        <taxon>Echinostomata</taxon>
        <taxon>Echinostomatoidea</taxon>
        <taxon>Fasciolidae</taxon>
        <taxon>Fasciola</taxon>
    </lineage>
</organism>